<gene>
    <name evidence="1" type="primary">hemH</name>
    <name type="ordered locus">RPE_4807</name>
</gene>
<accession>Q07H58</accession>
<keyword id="KW-0963">Cytoplasm</keyword>
<keyword id="KW-0350">Heme biosynthesis</keyword>
<keyword id="KW-0408">Iron</keyword>
<keyword id="KW-0456">Lyase</keyword>
<keyword id="KW-0479">Metal-binding</keyword>
<keyword id="KW-0627">Porphyrin biosynthesis</keyword>
<feature type="chain" id="PRO_1000019361" description="Ferrochelatase">
    <location>
        <begin position="1"/>
        <end position="345"/>
    </location>
</feature>
<feature type="binding site" evidence="1">
    <location>
        <position position="215"/>
    </location>
    <ligand>
        <name>Fe cation</name>
        <dbReference type="ChEBI" id="CHEBI:24875"/>
    </ligand>
</feature>
<feature type="binding site" evidence="1">
    <location>
        <position position="296"/>
    </location>
    <ligand>
        <name>Fe cation</name>
        <dbReference type="ChEBI" id="CHEBI:24875"/>
    </ligand>
</feature>
<proteinExistence type="inferred from homology"/>
<name>HEMH_RHOP5</name>
<evidence type="ECO:0000255" key="1">
    <source>
        <dbReference type="HAMAP-Rule" id="MF_00323"/>
    </source>
</evidence>
<dbReference type="EC" id="4.98.1.1" evidence="1"/>
<dbReference type="EMBL" id="CP000463">
    <property type="protein sequence ID" value="ABJ08726.1"/>
    <property type="molecule type" value="Genomic_DNA"/>
</dbReference>
<dbReference type="SMR" id="Q07H58"/>
<dbReference type="STRING" id="316055.RPE_4807"/>
<dbReference type="KEGG" id="rpe:RPE_4807"/>
<dbReference type="eggNOG" id="COG0276">
    <property type="taxonomic scope" value="Bacteria"/>
</dbReference>
<dbReference type="HOGENOM" id="CLU_018884_0_0_5"/>
<dbReference type="OrthoDB" id="9809741at2"/>
<dbReference type="UniPathway" id="UPA00252">
    <property type="reaction ID" value="UER00325"/>
</dbReference>
<dbReference type="GO" id="GO:0005737">
    <property type="term" value="C:cytoplasm"/>
    <property type="evidence" value="ECO:0007669"/>
    <property type="project" value="UniProtKB-SubCell"/>
</dbReference>
<dbReference type="GO" id="GO:0004325">
    <property type="term" value="F:ferrochelatase activity"/>
    <property type="evidence" value="ECO:0007669"/>
    <property type="project" value="UniProtKB-UniRule"/>
</dbReference>
<dbReference type="GO" id="GO:0046872">
    <property type="term" value="F:metal ion binding"/>
    <property type="evidence" value="ECO:0007669"/>
    <property type="project" value="UniProtKB-KW"/>
</dbReference>
<dbReference type="GO" id="GO:0006783">
    <property type="term" value="P:heme biosynthetic process"/>
    <property type="evidence" value="ECO:0007669"/>
    <property type="project" value="UniProtKB-UniRule"/>
</dbReference>
<dbReference type="CDD" id="cd00419">
    <property type="entry name" value="Ferrochelatase_C"/>
    <property type="match status" value="1"/>
</dbReference>
<dbReference type="CDD" id="cd03411">
    <property type="entry name" value="Ferrochelatase_N"/>
    <property type="match status" value="1"/>
</dbReference>
<dbReference type="FunFam" id="3.40.50.1400:FF:000002">
    <property type="entry name" value="Ferrochelatase"/>
    <property type="match status" value="1"/>
</dbReference>
<dbReference type="Gene3D" id="3.40.50.1400">
    <property type="match status" value="2"/>
</dbReference>
<dbReference type="HAMAP" id="MF_00323">
    <property type="entry name" value="Ferrochelatase"/>
    <property type="match status" value="1"/>
</dbReference>
<dbReference type="InterPro" id="IPR001015">
    <property type="entry name" value="Ferrochelatase"/>
</dbReference>
<dbReference type="InterPro" id="IPR019772">
    <property type="entry name" value="Ferrochelatase_AS"/>
</dbReference>
<dbReference type="InterPro" id="IPR033644">
    <property type="entry name" value="Ferrochelatase_C"/>
</dbReference>
<dbReference type="InterPro" id="IPR033659">
    <property type="entry name" value="Ferrochelatase_N"/>
</dbReference>
<dbReference type="NCBIfam" id="TIGR00109">
    <property type="entry name" value="hemH"/>
    <property type="match status" value="1"/>
</dbReference>
<dbReference type="PANTHER" id="PTHR11108">
    <property type="entry name" value="FERROCHELATASE"/>
    <property type="match status" value="1"/>
</dbReference>
<dbReference type="PANTHER" id="PTHR11108:SF1">
    <property type="entry name" value="FERROCHELATASE, MITOCHONDRIAL"/>
    <property type="match status" value="1"/>
</dbReference>
<dbReference type="Pfam" id="PF00762">
    <property type="entry name" value="Ferrochelatase"/>
    <property type="match status" value="1"/>
</dbReference>
<dbReference type="SUPFAM" id="SSF53800">
    <property type="entry name" value="Chelatase"/>
    <property type="match status" value="1"/>
</dbReference>
<dbReference type="PROSITE" id="PS00534">
    <property type="entry name" value="FERROCHELATASE"/>
    <property type="match status" value="1"/>
</dbReference>
<sequence>MTVIVPIHSPAVAPAPAPERVGVLLVNLGTPDSCDTKGVRIYLREFLSDPRVIENQGLFWKLALNGLILQTRPARKAKDYQKIWNHEKNESPLKTITRAQAHKLATSLSDRGHLVVDWAMRYGNPSMRSRIEAMVAKGCSRLLVVPLYPQYSAATSATVCDQAFRVLSELRAQPTMRVAPPYFRDSAYIDALANSIRSHLASLPFEPEIIVASFHGMPQAYIEKGDPYQAQCIATVDALRERMGLGDNKLLLTFQSRFGFDEWLQPYTDQTIQKLANDGVKRLAVVMPGFASDCLETLEEIAQENAETFLHNGGEHFSAVPCLNDSDGGIAVIRQLVLRELQGWL</sequence>
<protein>
    <recommendedName>
        <fullName evidence="1">Ferrochelatase</fullName>
        <ecNumber evidence="1">4.98.1.1</ecNumber>
    </recommendedName>
    <alternativeName>
        <fullName evidence="1">Heme synthase</fullName>
    </alternativeName>
    <alternativeName>
        <fullName evidence="1">Protoheme ferro-lyase</fullName>
    </alternativeName>
</protein>
<comment type="function">
    <text evidence="1">Catalyzes the ferrous insertion into protoporphyrin IX.</text>
</comment>
<comment type="catalytic activity">
    <reaction evidence="1">
        <text>heme b + 2 H(+) = protoporphyrin IX + Fe(2+)</text>
        <dbReference type="Rhea" id="RHEA:22584"/>
        <dbReference type="ChEBI" id="CHEBI:15378"/>
        <dbReference type="ChEBI" id="CHEBI:29033"/>
        <dbReference type="ChEBI" id="CHEBI:57306"/>
        <dbReference type="ChEBI" id="CHEBI:60344"/>
        <dbReference type="EC" id="4.98.1.1"/>
    </reaction>
</comment>
<comment type="pathway">
    <text evidence="1">Porphyrin-containing compound metabolism; protoheme biosynthesis; protoheme from protoporphyrin-IX: step 1/1.</text>
</comment>
<comment type="subcellular location">
    <subcellularLocation>
        <location evidence="1">Cytoplasm</location>
    </subcellularLocation>
</comment>
<comment type="similarity">
    <text evidence="1">Belongs to the ferrochelatase family.</text>
</comment>
<organism>
    <name type="scientific">Rhodopseudomonas palustris (strain BisA53)</name>
    <dbReference type="NCBI Taxonomy" id="316055"/>
    <lineage>
        <taxon>Bacteria</taxon>
        <taxon>Pseudomonadati</taxon>
        <taxon>Pseudomonadota</taxon>
        <taxon>Alphaproteobacteria</taxon>
        <taxon>Hyphomicrobiales</taxon>
        <taxon>Nitrobacteraceae</taxon>
        <taxon>Rhodopseudomonas</taxon>
    </lineage>
</organism>
<reference key="1">
    <citation type="submission" date="2006-09" db="EMBL/GenBank/DDBJ databases">
        <title>Complete sequence of Rhodopseudomonas palustris BisA53.</title>
        <authorList>
            <consortium name="US DOE Joint Genome Institute"/>
            <person name="Copeland A."/>
            <person name="Lucas S."/>
            <person name="Lapidus A."/>
            <person name="Barry K."/>
            <person name="Detter J.C."/>
            <person name="Glavina del Rio T."/>
            <person name="Hammon N."/>
            <person name="Israni S."/>
            <person name="Dalin E."/>
            <person name="Tice H."/>
            <person name="Pitluck S."/>
            <person name="Chain P."/>
            <person name="Malfatti S."/>
            <person name="Shin M."/>
            <person name="Vergez L."/>
            <person name="Schmutz J."/>
            <person name="Larimer F."/>
            <person name="Land M."/>
            <person name="Hauser L."/>
            <person name="Pelletier D.A."/>
            <person name="Kyrpides N."/>
            <person name="Kim E."/>
            <person name="Harwood C.S."/>
            <person name="Oda Y."/>
            <person name="Richardson P."/>
        </authorList>
    </citation>
    <scope>NUCLEOTIDE SEQUENCE [LARGE SCALE GENOMIC DNA]</scope>
    <source>
        <strain>BisA53</strain>
    </source>
</reference>